<gene>
    <name evidence="1" type="primary">hslO</name>
    <name type="synonym">hsp33</name>
    <name type="ordered locus">SP_2188</name>
</gene>
<accession>P64403</accession>
<accession>Q97N76</accession>
<proteinExistence type="inferred from homology"/>
<comment type="function">
    <text evidence="1">Redox regulated molecular chaperone. Protects both thermally unfolding and oxidatively damaged proteins from irreversible aggregation. Plays an important role in the bacterial defense system toward oxidative stress.</text>
</comment>
<comment type="subcellular location">
    <subcellularLocation>
        <location evidence="1">Cytoplasm</location>
    </subcellularLocation>
</comment>
<comment type="PTM">
    <text evidence="1">Under oxidizing conditions two disulfide bonds are formed involving the reactive cysteines. Under reducing conditions zinc is bound to the reactive cysteines and the protein is inactive.</text>
</comment>
<comment type="similarity">
    <text evidence="1">Belongs to the HSP33 family.</text>
</comment>
<feature type="chain" id="PRO_0000192210" description="33 kDa chaperonin">
    <location>
        <begin position="1"/>
        <end position="290"/>
    </location>
</feature>
<feature type="disulfide bond" description="Redox-active" evidence="1">
    <location>
        <begin position="235"/>
        <end position="237"/>
    </location>
</feature>
<feature type="disulfide bond" description="Redox-active" evidence="1">
    <location>
        <begin position="268"/>
        <end position="271"/>
    </location>
</feature>
<keyword id="KW-0143">Chaperone</keyword>
<keyword id="KW-0963">Cytoplasm</keyword>
<keyword id="KW-1015">Disulfide bond</keyword>
<keyword id="KW-0676">Redox-active center</keyword>
<keyword id="KW-1185">Reference proteome</keyword>
<keyword id="KW-0862">Zinc</keyword>
<name>HSLO_STRPN</name>
<evidence type="ECO:0000255" key="1">
    <source>
        <dbReference type="HAMAP-Rule" id="MF_00117"/>
    </source>
</evidence>
<reference key="1">
    <citation type="journal article" date="2001" name="Science">
        <title>Complete genome sequence of a virulent isolate of Streptococcus pneumoniae.</title>
        <authorList>
            <person name="Tettelin H."/>
            <person name="Nelson K.E."/>
            <person name="Paulsen I.T."/>
            <person name="Eisen J.A."/>
            <person name="Read T.D."/>
            <person name="Peterson S.N."/>
            <person name="Heidelberg J.F."/>
            <person name="DeBoy R.T."/>
            <person name="Haft D.H."/>
            <person name="Dodson R.J."/>
            <person name="Durkin A.S."/>
            <person name="Gwinn M.L."/>
            <person name="Kolonay J.F."/>
            <person name="Nelson W.C."/>
            <person name="Peterson J.D."/>
            <person name="Umayam L.A."/>
            <person name="White O."/>
            <person name="Salzberg S.L."/>
            <person name="Lewis M.R."/>
            <person name="Radune D."/>
            <person name="Holtzapple E.K."/>
            <person name="Khouri H.M."/>
            <person name="Wolf A.M."/>
            <person name="Utterback T.R."/>
            <person name="Hansen C.L."/>
            <person name="McDonald L.A."/>
            <person name="Feldblyum T.V."/>
            <person name="Angiuoli S.V."/>
            <person name="Dickinson T."/>
            <person name="Hickey E.K."/>
            <person name="Holt I.E."/>
            <person name="Loftus B.J."/>
            <person name="Yang F."/>
            <person name="Smith H.O."/>
            <person name="Venter J.C."/>
            <person name="Dougherty B.A."/>
            <person name="Morrison D.A."/>
            <person name="Hollingshead S.K."/>
            <person name="Fraser C.M."/>
        </authorList>
    </citation>
    <scope>NUCLEOTIDE SEQUENCE [LARGE SCALE GENOMIC DNA]</scope>
    <source>
        <strain>ATCC BAA-334 / TIGR4</strain>
    </source>
</reference>
<protein>
    <recommendedName>
        <fullName evidence="1">33 kDa chaperonin</fullName>
    </recommendedName>
    <alternativeName>
        <fullName evidence="1">Heat shock protein 33 homolog</fullName>
        <shortName evidence="1">HSP33</shortName>
    </alternativeName>
</protein>
<sequence length="290" mass="31663">MDKIIKTISESGAFRAFVLDSTETVRTAQEKHQTQASSTVALGRTLIASQILAANEKGNTKLTVKVLGSSSLGAIITVADTKGNVKGYVQNPGVDIKKTATGEVLVGPFVGNGQFLVITDYGTGNPYNSITPLISGEIGEDLAFYLTESQQTPSAVGLNVLLDEEDKVKVAGGFLVQVLPGAKKEEIARFEKRIQEMPAISTLLESDDHIEALLKAIYGDEAYKRLSEEEIRFQCDCSHERFMNALASLPSSDLQEMKEEDHGAEITCQFCQTTYNFDEKDLEELIRDKS</sequence>
<organism>
    <name type="scientific">Streptococcus pneumoniae serotype 4 (strain ATCC BAA-334 / TIGR4)</name>
    <dbReference type="NCBI Taxonomy" id="170187"/>
    <lineage>
        <taxon>Bacteria</taxon>
        <taxon>Bacillati</taxon>
        <taxon>Bacillota</taxon>
        <taxon>Bacilli</taxon>
        <taxon>Lactobacillales</taxon>
        <taxon>Streptococcaceae</taxon>
        <taxon>Streptococcus</taxon>
    </lineage>
</organism>
<dbReference type="EMBL" id="AE005672">
    <property type="protein sequence ID" value="AAK76239.1"/>
    <property type="molecule type" value="Genomic_DNA"/>
</dbReference>
<dbReference type="PIR" id="F95255">
    <property type="entry name" value="F95255"/>
</dbReference>
<dbReference type="RefSeq" id="WP_000357847.1">
    <property type="nucleotide sequence ID" value="NZ_CP155539.1"/>
</dbReference>
<dbReference type="SMR" id="P64403"/>
<dbReference type="PaxDb" id="170187-SP_2188"/>
<dbReference type="EnsemblBacteria" id="AAK76239">
    <property type="protein sequence ID" value="AAK76239"/>
    <property type="gene ID" value="SP_2188"/>
</dbReference>
<dbReference type="KEGG" id="spn:SP_2188"/>
<dbReference type="eggNOG" id="COG1281">
    <property type="taxonomic scope" value="Bacteria"/>
</dbReference>
<dbReference type="PhylomeDB" id="P64403"/>
<dbReference type="BioCyc" id="SPNE170187:G1FZB-2286-MONOMER"/>
<dbReference type="Proteomes" id="UP000000585">
    <property type="component" value="Chromosome"/>
</dbReference>
<dbReference type="GO" id="GO:0005737">
    <property type="term" value="C:cytoplasm"/>
    <property type="evidence" value="ECO:0007669"/>
    <property type="project" value="UniProtKB-SubCell"/>
</dbReference>
<dbReference type="GO" id="GO:0044183">
    <property type="term" value="F:protein folding chaperone"/>
    <property type="evidence" value="ECO:0007669"/>
    <property type="project" value="TreeGrafter"/>
</dbReference>
<dbReference type="GO" id="GO:0051082">
    <property type="term" value="F:unfolded protein binding"/>
    <property type="evidence" value="ECO:0007669"/>
    <property type="project" value="UniProtKB-UniRule"/>
</dbReference>
<dbReference type="GO" id="GO:0042026">
    <property type="term" value="P:protein refolding"/>
    <property type="evidence" value="ECO:0007669"/>
    <property type="project" value="TreeGrafter"/>
</dbReference>
<dbReference type="CDD" id="cd00498">
    <property type="entry name" value="Hsp33"/>
    <property type="match status" value="1"/>
</dbReference>
<dbReference type="Gene3D" id="3.55.30.10">
    <property type="entry name" value="Hsp33 domain"/>
    <property type="match status" value="1"/>
</dbReference>
<dbReference type="Gene3D" id="3.90.1280.10">
    <property type="entry name" value="HSP33 redox switch-like"/>
    <property type="match status" value="1"/>
</dbReference>
<dbReference type="HAMAP" id="MF_00117">
    <property type="entry name" value="HslO"/>
    <property type="match status" value="1"/>
</dbReference>
<dbReference type="InterPro" id="IPR000397">
    <property type="entry name" value="Heat_shock_Hsp33"/>
</dbReference>
<dbReference type="InterPro" id="IPR016154">
    <property type="entry name" value="Heat_shock_Hsp33_C"/>
</dbReference>
<dbReference type="InterPro" id="IPR016153">
    <property type="entry name" value="Heat_shock_Hsp33_N"/>
</dbReference>
<dbReference type="NCBIfam" id="NF001033">
    <property type="entry name" value="PRK00114.1"/>
    <property type="match status" value="1"/>
</dbReference>
<dbReference type="PANTHER" id="PTHR30111">
    <property type="entry name" value="33 KDA CHAPERONIN"/>
    <property type="match status" value="1"/>
</dbReference>
<dbReference type="PANTHER" id="PTHR30111:SF1">
    <property type="entry name" value="33 KDA CHAPERONIN"/>
    <property type="match status" value="1"/>
</dbReference>
<dbReference type="Pfam" id="PF01430">
    <property type="entry name" value="HSP33"/>
    <property type="match status" value="1"/>
</dbReference>
<dbReference type="PIRSF" id="PIRSF005261">
    <property type="entry name" value="Heat_shock_Hsp33"/>
    <property type="match status" value="1"/>
</dbReference>
<dbReference type="SUPFAM" id="SSF64397">
    <property type="entry name" value="Hsp33 domain"/>
    <property type="match status" value="1"/>
</dbReference>
<dbReference type="SUPFAM" id="SSF118352">
    <property type="entry name" value="HSP33 redox switch-like"/>
    <property type="match status" value="1"/>
</dbReference>